<accession>Q3MA58</accession>
<sequence>MFTIDLSIKNTAFPITVQRKTAEDAEAVYQLILAAIRSGNPDIVELKCEGKTEKKIAVRASEISGVQITQKDGVTTSSGRAPGFFALAGE</sequence>
<proteinExistence type="inferred from homology"/>
<name>Y2513_TRIV2</name>
<evidence type="ECO:0000255" key="1">
    <source>
        <dbReference type="HAMAP-Rule" id="MF_01360"/>
    </source>
</evidence>
<protein>
    <recommendedName>
        <fullName evidence="1">UPF0367 protein Ava_2513</fullName>
    </recommendedName>
</protein>
<reference key="1">
    <citation type="journal article" date="2014" name="Stand. Genomic Sci.">
        <title>Complete genome sequence of Anabaena variabilis ATCC 29413.</title>
        <authorList>
            <person name="Thiel T."/>
            <person name="Pratte B.S."/>
            <person name="Zhong J."/>
            <person name="Goodwin L."/>
            <person name="Copeland A."/>
            <person name="Lucas S."/>
            <person name="Han C."/>
            <person name="Pitluck S."/>
            <person name="Land M.L."/>
            <person name="Kyrpides N.C."/>
            <person name="Woyke T."/>
        </authorList>
    </citation>
    <scope>NUCLEOTIDE SEQUENCE [LARGE SCALE GENOMIC DNA]</scope>
    <source>
        <strain>ATCC 29413 / PCC 7937</strain>
    </source>
</reference>
<comment type="similarity">
    <text evidence="1">Belongs to the UPF0367 family.</text>
</comment>
<feature type="chain" id="PRO_0000240491" description="UPF0367 protein Ava_2513">
    <location>
        <begin position="1"/>
        <end position="90"/>
    </location>
</feature>
<dbReference type="EMBL" id="CP000117">
    <property type="protein sequence ID" value="ABA22128.1"/>
    <property type="molecule type" value="Genomic_DNA"/>
</dbReference>
<dbReference type="RefSeq" id="WP_010998680.1">
    <property type="nucleotide sequence ID" value="NC_007413.1"/>
</dbReference>
<dbReference type="STRING" id="240292.Ava_2513"/>
<dbReference type="KEGG" id="ava:Ava_2513"/>
<dbReference type="eggNOG" id="ENOG5032YB3">
    <property type="taxonomic scope" value="Bacteria"/>
</dbReference>
<dbReference type="HOGENOM" id="CLU_180777_0_0_3"/>
<dbReference type="Proteomes" id="UP000002533">
    <property type="component" value="Chromosome"/>
</dbReference>
<dbReference type="HAMAP" id="MF_01360">
    <property type="entry name" value="UPF0367"/>
    <property type="match status" value="1"/>
</dbReference>
<dbReference type="InterPro" id="IPR020885">
    <property type="entry name" value="UPF0367"/>
</dbReference>
<dbReference type="NCBIfam" id="NF010236">
    <property type="entry name" value="PRK13683.1"/>
    <property type="match status" value="1"/>
</dbReference>
<gene>
    <name type="ordered locus">Ava_2513</name>
</gene>
<organism>
    <name type="scientific">Trichormus variabilis (strain ATCC 29413 / PCC 7937)</name>
    <name type="common">Anabaena variabilis</name>
    <dbReference type="NCBI Taxonomy" id="240292"/>
    <lineage>
        <taxon>Bacteria</taxon>
        <taxon>Bacillati</taxon>
        <taxon>Cyanobacteriota</taxon>
        <taxon>Cyanophyceae</taxon>
        <taxon>Nostocales</taxon>
        <taxon>Nostocaceae</taxon>
        <taxon>Trichormus</taxon>
    </lineage>
</organism>